<evidence type="ECO:0000250" key="1">
    <source>
        <dbReference type="UniProtKB" id="Q00471"/>
    </source>
</evidence>
<evidence type="ECO:0000255" key="2">
    <source>
        <dbReference type="HAMAP-Rule" id="MF_00633"/>
    </source>
</evidence>
<evidence type="ECO:0000269" key="3">
    <source>
    </source>
</evidence>
<evidence type="ECO:0000305" key="4">
    <source>
    </source>
</evidence>
<evidence type="ECO:0007744" key="5">
    <source>
        <dbReference type="PDB" id="7R0W"/>
    </source>
</evidence>
<evidence type="ECO:0007744" key="6">
    <source>
        <dbReference type="PDB" id="7ZXY"/>
    </source>
</evidence>
<evidence type="ECO:0007829" key="7">
    <source>
        <dbReference type="PDB" id="7R0W"/>
    </source>
</evidence>
<keyword id="KW-0002">3D-structure</keyword>
<keyword id="KW-0249">Electron transport</keyword>
<keyword id="KW-0349">Heme</keyword>
<keyword id="KW-0408">Iron</keyword>
<keyword id="KW-0472">Membrane</keyword>
<keyword id="KW-0479">Metal-binding</keyword>
<keyword id="KW-0602">Photosynthesis</keyword>
<keyword id="KW-1185">Reference proteome</keyword>
<keyword id="KW-0793">Thylakoid</keyword>
<keyword id="KW-0812">Transmembrane</keyword>
<keyword id="KW-1133">Transmembrane helix</keyword>
<keyword id="KW-0813">Transport</keyword>
<organism>
    <name type="scientific">Synechocystis sp. (strain ATCC 27184 / PCC 6803 / Kazusa)</name>
    <dbReference type="NCBI Taxonomy" id="1111708"/>
    <lineage>
        <taxon>Bacteria</taxon>
        <taxon>Bacillati</taxon>
        <taxon>Cyanobacteriota</taxon>
        <taxon>Cyanophyceae</taxon>
        <taxon>Synechococcales</taxon>
        <taxon>Merismopediaceae</taxon>
        <taxon>Synechocystis</taxon>
    </lineage>
</organism>
<dbReference type="EMBL" id="Z31580">
    <property type="protein sequence ID" value="CAA83452.1"/>
    <property type="molecule type" value="Genomic_DNA"/>
</dbReference>
<dbReference type="EMBL" id="BA000022">
    <property type="protein sequence ID" value="BAA10149.1"/>
    <property type="molecule type" value="Genomic_DNA"/>
</dbReference>
<dbReference type="PIR" id="S76297">
    <property type="entry name" value="S76297"/>
</dbReference>
<dbReference type="PDB" id="7R0W">
    <property type="method" value="EM"/>
    <property type="resolution" value="2.80 A"/>
    <property type="chains" value="A/I=1-222"/>
</dbReference>
<dbReference type="PDB" id="7ZXY">
    <property type="method" value="EM"/>
    <property type="resolution" value="3.15 A"/>
    <property type="chains" value="A/I=1-222"/>
</dbReference>
<dbReference type="PDBsum" id="7R0W"/>
<dbReference type="PDBsum" id="7ZXY"/>
<dbReference type="EMDB" id="EMD-14224"/>
<dbReference type="EMDB" id="EMD-15017"/>
<dbReference type="SMR" id="Q57038"/>
<dbReference type="FunCoup" id="Q57038">
    <property type="interactions" value="166"/>
</dbReference>
<dbReference type="IntAct" id="Q57038">
    <property type="interactions" value="2"/>
</dbReference>
<dbReference type="STRING" id="1148.gene:10499642"/>
<dbReference type="TCDB" id="3.E.2.2.2">
    <property type="family name" value="the photosynthetic reaction center (prc) family"/>
</dbReference>
<dbReference type="PaxDb" id="1148-1001522"/>
<dbReference type="EnsemblBacteria" id="BAA10149">
    <property type="protein sequence ID" value="BAA10149"/>
    <property type="gene ID" value="BAA10149"/>
</dbReference>
<dbReference type="KEGG" id="syn:slr0342"/>
<dbReference type="eggNOG" id="COG1290">
    <property type="taxonomic scope" value="Bacteria"/>
</dbReference>
<dbReference type="InParanoid" id="Q57038"/>
<dbReference type="PhylomeDB" id="Q57038"/>
<dbReference type="Proteomes" id="UP000001425">
    <property type="component" value="Chromosome"/>
</dbReference>
<dbReference type="GO" id="GO:0009512">
    <property type="term" value="C:cytochrome b6f complex"/>
    <property type="evidence" value="ECO:0000314"/>
    <property type="project" value="UniProtKB"/>
</dbReference>
<dbReference type="GO" id="GO:0016020">
    <property type="term" value="C:membrane"/>
    <property type="evidence" value="ECO:0000318"/>
    <property type="project" value="GO_Central"/>
</dbReference>
<dbReference type="GO" id="GO:0031676">
    <property type="term" value="C:plasma membrane-derived thylakoid membrane"/>
    <property type="evidence" value="ECO:0007669"/>
    <property type="project" value="UniProtKB-SubCell"/>
</dbReference>
<dbReference type="GO" id="GO:0045158">
    <property type="term" value="F:electron transporter, transferring electrons within cytochrome b6/f complex of photosystem II activity"/>
    <property type="evidence" value="ECO:0007669"/>
    <property type="project" value="UniProtKB-UniRule"/>
</dbReference>
<dbReference type="GO" id="GO:0046872">
    <property type="term" value="F:metal ion binding"/>
    <property type="evidence" value="ECO:0007669"/>
    <property type="project" value="UniProtKB-KW"/>
</dbReference>
<dbReference type="GO" id="GO:0016491">
    <property type="term" value="F:oxidoreductase activity"/>
    <property type="evidence" value="ECO:0007669"/>
    <property type="project" value="InterPro"/>
</dbReference>
<dbReference type="GO" id="GO:0015979">
    <property type="term" value="P:photosynthesis"/>
    <property type="evidence" value="ECO:0007669"/>
    <property type="project" value="UniProtKB-UniRule"/>
</dbReference>
<dbReference type="GO" id="GO:0022904">
    <property type="term" value="P:respiratory electron transport chain"/>
    <property type="evidence" value="ECO:0007669"/>
    <property type="project" value="InterPro"/>
</dbReference>
<dbReference type="CDD" id="cd00284">
    <property type="entry name" value="Cytochrome_b_N"/>
    <property type="match status" value="1"/>
</dbReference>
<dbReference type="FunFam" id="1.20.810.10:FF:000001">
    <property type="entry name" value="Cytochrome b6"/>
    <property type="match status" value="1"/>
</dbReference>
<dbReference type="Gene3D" id="1.20.810.10">
    <property type="entry name" value="Cytochrome Bc1 Complex, Chain C"/>
    <property type="match status" value="1"/>
</dbReference>
<dbReference type="HAMAP" id="MF_00633">
    <property type="entry name" value="Cytb6_f_cytb6"/>
    <property type="match status" value="1"/>
</dbReference>
<dbReference type="InterPro" id="IPR005797">
    <property type="entry name" value="Cyt_b/b6_N"/>
</dbReference>
<dbReference type="InterPro" id="IPR023530">
    <property type="entry name" value="Cyt_B6_PetB"/>
</dbReference>
<dbReference type="InterPro" id="IPR027387">
    <property type="entry name" value="Cytb/b6-like_sf"/>
</dbReference>
<dbReference type="InterPro" id="IPR048259">
    <property type="entry name" value="Cytochrome_b_N_euk/bac"/>
</dbReference>
<dbReference type="InterPro" id="IPR016174">
    <property type="entry name" value="Di-haem_cyt_TM"/>
</dbReference>
<dbReference type="NCBIfam" id="NF002990">
    <property type="entry name" value="PRK03735.1"/>
    <property type="match status" value="1"/>
</dbReference>
<dbReference type="PANTHER" id="PTHR19271">
    <property type="entry name" value="CYTOCHROME B"/>
    <property type="match status" value="1"/>
</dbReference>
<dbReference type="PANTHER" id="PTHR19271:SF16">
    <property type="entry name" value="CYTOCHROME B"/>
    <property type="match status" value="1"/>
</dbReference>
<dbReference type="Pfam" id="PF00033">
    <property type="entry name" value="Cytochrome_B"/>
    <property type="match status" value="1"/>
</dbReference>
<dbReference type="PIRSF" id="PIRSF000032">
    <property type="entry name" value="Cytochrome_b6"/>
    <property type="match status" value="1"/>
</dbReference>
<dbReference type="SUPFAM" id="SSF81342">
    <property type="entry name" value="Transmembrane di-heme cytochromes"/>
    <property type="match status" value="1"/>
</dbReference>
<dbReference type="PROSITE" id="PS51002">
    <property type="entry name" value="CYTB_NTER"/>
    <property type="match status" value="1"/>
</dbReference>
<comment type="function">
    <text evidence="2 4">Component of the cytochrome b6-f complex, which mediates electron transfer between photosystem II (PSII) and photosystem I (PSI), cyclic electron flow around PSI, and state transitions.</text>
</comment>
<comment type="cofactor">
    <cofactor evidence="3">
        <name>heme b</name>
        <dbReference type="ChEBI" id="CHEBI:60344"/>
    </cofactor>
    <text evidence="3">Binds 2 heme b groups non-covalently with two histidine residues as axial ligands.</text>
</comment>
<comment type="cofactor">
    <cofactor evidence="3">
        <name>heme c</name>
        <dbReference type="ChEBI" id="CHEBI:61717"/>
    </cofactor>
    <text evidence="1 3">Binds one heme group covalently by a single cysteine link with no axial amino acid ligand (PubMed:35726684). This heme was named heme ci (By similarity).</text>
</comment>
<comment type="subunit">
    <text evidence="2 3">The 4 large subunits of the cytochrome b6-f complex are cytochrome b6, subunit IV (17 kDa polypeptide, PetD), cytochrome f and the Rieske protein, while the 4 small subunits are PetG, PetL, PetM and PetN. The complex functions as a dimer.</text>
</comment>
<comment type="subcellular location">
    <subcellularLocation>
        <location evidence="2">Cellular thylakoid membrane</location>
        <topology evidence="2">Multi-pass membrane protein</topology>
    </subcellularLocation>
</comment>
<comment type="miscellaneous">
    <text evidence="2">Heme 1 (or BH or b566) is high-potential and absorbs at about 566 nm, and heme 2 (or BL or b562) is low-potential and absorbs at about 562 nm.</text>
</comment>
<comment type="similarity">
    <text evidence="2">Belongs to the cytochrome b family. PetB subfamily.</text>
</comment>
<protein>
    <recommendedName>
        <fullName evidence="2">Cytochrome b6</fullName>
    </recommendedName>
</protein>
<name>CYB6_SYNY3</name>
<gene>
    <name evidence="2" type="primary">petB</name>
    <name type="ordered locus">slr0342</name>
</gene>
<accession>Q57038</accession>
<reference key="1">
    <citation type="journal article" date="1994" name="Biochim. Biophys. Acta">
        <title>Nucleotide sequence of the petB gene encoding cytochrome b6 from the mesophilic cyanobacterium Synechocystis PCC 6803: implications for evolution and function.</title>
        <authorList>
            <person name="Kruip J."/>
            <person name="Nixon P.J."/>
            <person name="Osiewacz H.D."/>
            <person name="Roegner M."/>
        </authorList>
    </citation>
    <scope>NUCLEOTIDE SEQUENCE [GENOMIC DNA]</scope>
</reference>
<reference key="2">
    <citation type="journal article" date="1995" name="DNA Res.">
        <title>Sequence analysis of the genome of the unicellular cyanobacterium Synechocystis sp. strain PCC6803. I. Sequence features in the 1 Mb region from map positions 64% to 92% of the genome.</title>
        <authorList>
            <person name="Kaneko T."/>
            <person name="Tanaka A."/>
            <person name="Sato S."/>
            <person name="Kotani H."/>
            <person name="Sazuka T."/>
            <person name="Miyajima N."/>
            <person name="Sugiura M."/>
            <person name="Tabata S."/>
        </authorList>
    </citation>
    <scope>NUCLEOTIDE SEQUENCE [LARGE SCALE GENOMIC DNA]</scope>
    <source>
        <strain>ATCC 27184 / PCC 6803 / N-1</strain>
    </source>
</reference>
<reference key="3">
    <citation type="journal article" date="1996" name="DNA Res.">
        <title>Sequence analysis of the genome of the unicellular cyanobacterium Synechocystis sp. strain PCC6803. II. Sequence determination of the entire genome and assignment of potential protein-coding regions.</title>
        <authorList>
            <person name="Kaneko T."/>
            <person name="Sato S."/>
            <person name="Kotani H."/>
            <person name="Tanaka A."/>
            <person name="Asamizu E."/>
            <person name="Nakamura Y."/>
            <person name="Miyajima N."/>
            <person name="Hirosawa M."/>
            <person name="Sugiura M."/>
            <person name="Sasamoto S."/>
            <person name="Kimura T."/>
            <person name="Hosouchi T."/>
            <person name="Matsuno A."/>
            <person name="Muraki A."/>
            <person name="Nakazaki N."/>
            <person name="Naruo K."/>
            <person name="Okumura S."/>
            <person name="Shimpo S."/>
            <person name="Takeuchi C."/>
            <person name="Wada T."/>
            <person name="Watanabe A."/>
            <person name="Yamada M."/>
            <person name="Yasuda M."/>
            <person name="Tabata S."/>
        </authorList>
    </citation>
    <scope>NUCLEOTIDE SEQUENCE [LARGE SCALE GENOMIC DNA]</scope>
    <source>
        <strain>ATCC 27184 / PCC 6803 / Kazusa</strain>
    </source>
</reference>
<reference evidence="5 6" key="4">
    <citation type="journal article" date="2022" name="Biochem. J.">
        <title>Cryo-EM structures of the Synechocystis sp. PCC 6803 cytochrome b6f complex with and without the regulatory PetP subunit.</title>
        <authorList>
            <person name="Proctor M.S."/>
            <person name="Malone L.A."/>
            <person name="Farmer D.A."/>
            <person name="Swainsbury D.J.K."/>
            <person name="Hawkings F.R."/>
            <person name="Pastorelli F."/>
            <person name="Emrich-Mills T.Z."/>
            <person name="Siebert C.A."/>
            <person name="Hunter C.N."/>
            <person name="Johnson M.P."/>
            <person name="Hitchcock A."/>
        </authorList>
    </citation>
    <scope>STRUCTURE BY ELECTRON MICROSCOPY (2.80 ANGSTROMS) IN COMPLEX WITH 3 HEMES AND OTHER SUBUNITS OF THE CYTOCHROME B6F COMPLEX</scope>
    <scope>FUNCTION</scope>
    <scope>COFACTOR</scope>
    <scope>SUBUNIT</scope>
</reference>
<feature type="chain" id="PRO_0000061838" description="Cytochrome b6">
    <location>
        <begin position="1"/>
        <end position="222"/>
    </location>
</feature>
<feature type="transmembrane region" description="Helical" evidence="2">
    <location>
        <begin position="39"/>
        <end position="59"/>
    </location>
</feature>
<feature type="transmembrane region" description="Helical" evidence="2">
    <location>
        <begin position="97"/>
        <end position="117"/>
    </location>
</feature>
<feature type="transmembrane region" description="Helical" evidence="2">
    <location>
        <begin position="123"/>
        <end position="143"/>
    </location>
</feature>
<feature type="transmembrane region" description="Helical" evidence="2">
    <location>
        <begin position="193"/>
        <end position="213"/>
    </location>
</feature>
<feature type="binding site" evidence="3 5 6">
    <location>
        <position position="41"/>
    </location>
    <ligand>
        <name>heme b</name>
        <dbReference type="ChEBI" id="CHEBI:60344"/>
        <label>1</label>
    </ligand>
</feature>
<feature type="binding site" description="covalent" evidence="3 6">
    <location>
        <position position="42"/>
    </location>
    <ligand>
        <name>heme c</name>
        <dbReference type="ChEBI" id="CHEBI:61717"/>
    </ligand>
</feature>
<feature type="binding site" evidence="3 5 6">
    <location>
        <position position="90"/>
    </location>
    <ligand>
        <name>heme b</name>
        <dbReference type="ChEBI" id="CHEBI:60344"/>
        <label>2</label>
    </ligand>
</feature>
<feature type="binding site" description="axial binding residue" evidence="3 5 6">
    <location>
        <position position="93"/>
    </location>
    <ligand>
        <name>heme b</name>
        <dbReference type="ChEBI" id="CHEBI:60344"/>
        <label>2</label>
    </ligand>
    <ligandPart>
        <name>Fe</name>
        <dbReference type="ChEBI" id="CHEBI:18248"/>
    </ligandPart>
</feature>
<feature type="binding site" evidence="3 5">
    <location>
        <position position="94"/>
    </location>
    <ligand>
        <name>heme b</name>
        <dbReference type="ChEBI" id="CHEBI:60344"/>
        <label>2</label>
    </ligand>
</feature>
<feature type="binding site" description="axial binding residue" evidence="3 5 6">
    <location>
        <position position="107"/>
    </location>
    <ligand>
        <name>heme b</name>
        <dbReference type="ChEBI" id="CHEBI:60344"/>
        <label>1</label>
    </ligand>
    <ligandPart>
        <name>Fe</name>
        <dbReference type="ChEBI" id="CHEBI:18248"/>
    </ligandPart>
</feature>
<feature type="binding site" evidence="3 5 6">
    <location>
        <position position="110"/>
    </location>
    <ligand>
        <name>heme b</name>
        <dbReference type="ChEBI" id="CHEBI:60344"/>
        <label>1</label>
    </ligand>
</feature>
<feature type="binding site" description="axial binding residue" evidence="3 5 6">
    <location>
        <position position="194"/>
    </location>
    <ligand>
        <name>heme b</name>
        <dbReference type="ChEBI" id="CHEBI:60344"/>
        <label>2</label>
    </ligand>
    <ligandPart>
        <name>Fe</name>
        <dbReference type="ChEBI" id="CHEBI:18248"/>
    </ligandPart>
</feature>
<feature type="binding site" description="axial binding residue" evidence="3 5 6">
    <location>
        <position position="209"/>
    </location>
    <ligand>
        <name>heme b</name>
        <dbReference type="ChEBI" id="CHEBI:60344"/>
        <label>1</label>
    </ligand>
    <ligandPart>
        <name>Fe</name>
        <dbReference type="ChEBI" id="CHEBI:18248"/>
    </ligandPart>
</feature>
<feature type="binding site" evidence="3 6">
    <location>
        <position position="214"/>
    </location>
    <ligand>
        <name>heme c</name>
        <dbReference type="ChEBI" id="CHEBI:61717"/>
    </ligand>
</feature>
<feature type="binding site" evidence="3 5 6">
    <location>
        <position position="218"/>
    </location>
    <ligand>
        <name>heme c</name>
        <dbReference type="ChEBI" id="CHEBI:61717"/>
    </ligand>
</feature>
<feature type="binding site" evidence="3 5 6">
    <location>
        <position position="219"/>
    </location>
    <ligand>
        <name>heme b</name>
        <dbReference type="ChEBI" id="CHEBI:60344"/>
        <label>1</label>
    </ligand>
</feature>
<feature type="helix" evidence="7">
    <location>
        <begin position="4"/>
        <end position="8"/>
    </location>
</feature>
<feature type="helix" evidence="7">
    <location>
        <begin position="10"/>
        <end position="19"/>
    </location>
</feature>
<feature type="helix" evidence="7">
    <location>
        <begin position="22"/>
        <end position="30"/>
    </location>
</feature>
<feature type="helix" evidence="7">
    <location>
        <begin position="39"/>
        <end position="41"/>
    </location>
</feature>
<feature type="helix" evidence="7">
    <location>
        <begin position="42"/>
        <end position="62"/>
    </location>
</feature>
<feature type="turn" evidence="7">
    <location>
        <begin position="69"/>
        <end position="71"/>
    </location>
</feature>
<feature type="helix" evidence="7">
    <location>
        <begin position="72"/>
        <end position="80"/>
    </location>
</feature>
<feature type="helix" evidence="7">
    <location>
        <begin position="86"/>
        <end position="113"/>
    </location>
</feature>
<feature type="turn" evidence="7">
    <location>
        <begin position="114"/>
        <end position="117"/>
    </location>
</feature>
<feature type="turn" evidence="7">
    <location>
        <begin position="119"/>
        <end position="121"/>
    </location>
</feature>
<feature type="helix" evidence="7">
    <location>
        <begin position="122"/>
        <end position="144"/>
    </location>
</feature>
<feature type="helix" evidence="7">
    <location>
        <begin position="149"/>
        <end position="160"/>
    </location>
</feature>
<feature type="helix" evidence="7">
    <location>
        <begin position="161"/>
        <end position="164"/>
    </location>
</feature>
<feature type="strand" evidence="7">
    <location>
        <begin position="165"/>
        <end position="167"/>
    </location>
</feature>
<feature type="helix" evidence="7">
    <location>
        <begin position="168"/>
        <end position="177"/>
    </location>
</feature>
<feature type="strand" evidence="7">
    <location>
        <begin position="178"/>
        <end position="183"/>
    </location>
</feature>
<feature type="helix" evidence="7">
    <location>
        <begin position="184"/>
        <end position="195"/>
    </location>
</feature>
<feature type="helix" evidence="7">
    <location>
        <begin position="197"/>
        <end position="216"/>
    </location>
</feature>
<proteinExistence type="evidence at protein level"/>
<sequence>MFSKEVTESKVFQWFNDRLEVQAISDDIASKYVPPHVNIFYCLGGLTLTCFLIQFATGFAMTFYYKPTVTEAFASVQYIMNEVNFGWLIRSIHRWSASMMVLMMILHVFRVYLTGGFKKPRELTWVVGVMLAVTTVTFGVTGYSLPWDQVGYWAVKIVSGVPAAIPVVGDQLVTLMRGSESVGQATLTRFYSLHTFVLPWAIAVLLLLHFLMIRKQGISGPL</sequence>